<feature type="chain" id="PRO_0000188034" description="Acyl-[acyl-carrier-protein]--UDP-N-acetylglucosamine O-acyltransferase">
    <location>
        <begin position="1"/>
        <end position="278"/>
    </location>
</feature>
<dbReference type="EC" id="2.3.1.129" evidence="1"/>
<dbReference type="EMBL" id="AE017223">
    <property type="protein sequence ID" value="AAX74496.1"/>
    <property type="molecule type" value="Genomic_DNA"/>
</dbReference>
<dbReference type="RefSeq" id="WP_002964279.1">
    <property type="nucleotide sequence ID" value="NC_006932.1"/>
</dbReference>
<dbReference type="SMR" id="P0C110"/>
<dbReference type="EnsemblBacteria" id="AAX74496">
    <property type="protein sequence ID" value="AAX74496"/>
    <property type="gene ID" value="BruAb1_1157"/>
</dbReference>
<dbReference type="GeneID" id="97533598"/>
<dbReference type="KEGG" id="bmb:BruAb1_1157"/>
<dbReference type="HOGENOM" id="CLU_061249_0_0_5"/>
<dbReference type="UniPathway" id="UPA00359">
    <property type="reaction ID" value="UER00477"/>
</dbReference>
<dbReference type="Proteomes" id="UP000000540">
    <property type="component" value="Chromosome I"/>
</dbReference>
<dbReference type="GO" id="GO:0005737">
    <property type="term" value="C:cytoplasm"/>
    <property type="evidence" value="ECO:0007669"/>
    <property type="project" value="UniProtKB-SubCell"/>
</dbReference>
<dbReference type="GO" id="GO:0016020">
    <property type="term" value="C:membrane"/>
    <property type="evidence" value="ECO:0007669"/>
    <property type="project" value="GOC"/>
</dbReference>
<dbReference type="GO" id="GO:0008780">
    <property type="term" value="F:acyl-[acyl-carrier-protein]-UDP-N-acetylglucosamine O-acyltransferase activity"/>
    <property type="evidence" value="ECO:0007669"/>
    <property type="project" value="UniProtKB-UniRule"/>
</dbReference>
<dbReference type="GO" id="GO:0009245">
    <property type="term" value="P:lipid A biosynthetic process"/>
    <property type="evidence" value="ECO:0007669"/>
    <property type="project" value="UniProtKB-UniRule"/>
</dbReference>
<dbReference type="CDD" id="cd03351">
    <property type="entry name" value="LbH_UDP-GlcNAc_AT"/>
    <property type="match status" value="1"/>
</dbReference>
<dbReference type="Gene3D" id="2.160.10.10">
    <property type="entry name" value="Hexapeptide repeat proteins"/>
    <property type="match status" value="1"/>
</dbReference>
<dbReference type="Gene3D" id="1.20.1180.10">
    <property type="entry name" value="Udp N-acetylglucosamine O-acyltransferase, C-terminal domain"/>
    <property type="match status" value="1"/>
</dbReference>
<dbReference type="HAMAP" id="MF_00387">
    <property type="entry name" value="LpxA"/>
    <property type="match status" value="1"/>
</dbReference>
<dbReference type="InterPro" id="IPR029098">
    <property type="entry name" value="Acetyltransf_C"/>
</dbReference>
<dbReference type="InterPro" id="IPR037157">
    <property type="entry name" value="Acetyltransf_C_sf"/>
</dbReference>
<dbReference type="InterPro" id="IPR001451">
    <property type="entry name" value="Hexapep"/>
</dbReference>
<dbReference type="InterPro" id="IPR018357">
    <property type="entry name" value="Hexapep_transf_CS"/>
</dbReference>
<dbReference type="InterPro" id="IPR010137">
    <property type="entry name" value="Lipid_A_LpxA"/>
</dbReference>
<dbReference type="InterPro" id="IPR011004">
    <property type="entry name" value="Trimer_LpxA-like_sf"/>
</dbReference>
<dbReference type="NCBIfam" id="TIGR01852">
    <property type="entry name" value="lipid_A_lpxA"/>
    <property type="match status" value="1"/>
</dbReference>
<dbReference type="NCBIfam" id="NF003657">
    <property type="entry name" value="PRK05289.1"/>
    <property type="match status" value="1"/>
</dbReference>
<dbReference type="PANTHER" id="PTHR43480">
    <property type="entry name" value="ACYL-[ACYL-CARRIER-PROTEIN]--UDP-N-ACETYLGLUCOSAMINE O-ACYLTRANSFERASE"/>
    <property type="match status" value="1"/>
</dbReference>
<dbReference type="PANTHER" id="PTHR43480:SF1">
    <property type="entry name" value="ACYL-[ACYL-CARRIER-PROTEIN]--UDP-N-ACETYLGLUCOSAMINE O-ACYLTRANSFERASE, MITOCHONDRIAL-RELATED"/>
    <property type="match status" value="1"/>
</dbReference>
<dbReference type="Pfam" id="PF13720">
    <property type="entry name" value="Acetyltransf_11"/>
    <property type="match status" value="1"/>
</dbReference>
<dbReference type="Pfam" id="PF00132">
    <property type="entry name" value="Hexapep"/>
    <property type="match status" value="2"/>
</dbReference>
<dbReference type="PIRSF" id="PIRSF000456">
    <property type="entry name" value="UDP-GlcNAc_acltr"/>
    <property type="match status" value="1"/>
</dbReference>
<dbReference type="SUPFAM" id="SSF51161">
    <property type="entry name" value="Trimeric LpxA-like enzymes"/>
    <property type="match status" value="1"/>
</dbReference>
<dbReference type="PROSITE" id="PS00101">
    <property type="entry name" value="HEXAPEP_TRANSFERASES"/>
    <property type="match status" value="1"/>
</dbReference>
<gene>
    <name evidence="1" type="primary">lpxA</name>
    <name type="ordered locus">BruAb1_1157</name>
</gene>
<accession>P0C110</accession>
<accession>P54080</accession>
<accession>Q57CY8</accession>
<sequence>MKETFIHPTALVEPGVELGQGVSVGPFCHVQSGAIIGNDCELMSHVVITGATTLGAGTKVYPHAILGCDPQNNKHKGGPTRLNVGVNCIIREGVTMHKGSDNARGYTSIGDNCSFLAYAHVAHDCDIGDYVTFSNNVMIGGHTSIGHHAILGGGAAVHQFVRVGHHAFIGGLAAVVSDLIPYGMAIGVHAHLGGLNIIGMKRSGMERKEIHNLRHAVRMLFDRTKPIRQRAQDVLAAIPDSPTVSDMISFINVDTKRAYCTPPLDAAHGGAGHDSDED</sequence>
<name>LPXA_BRUAB</name>
<keyword id="KW-0012">Acyltransferase</keyword>
<keyword id="KW-0963">Cytoplasm</keyword>
<keyword id="KW-0441">Lipid A biosynthesis</keyword>
<keyword id="KW-0444">Lipid biosynthesis</keyword>
<keyword id="KW-0443">Lipid metabolism</keyword>
<keyword id="KW-0677">Repeat</keyword>
<keyword id="KW-0808">Transferase</keyword>
<comment type="function">
    <text evidence="1">Involved in the biosynthesis of lipid A, a phosphorylated glycolipid that anchors the lipopolysaccharide to the outer membrane of the cell.</text>
</comment>
<comment type="catalytic activity">
    <reaction evidence="1">
        <text>a (3R)-hydroxyacyl-[ACP] + UDP-N-acetyl-alpha-D-glucosamine = a UDP-3-O-[(3R)-3-hydroxyacyl]-N-acetyl-alpha-D-glucosamine + holo-[ACP]</text>
        <dbReference type="Rhea" id="RHEA:67812"/>
        <dbReference type="Rhea" id="RHEA-COMP:9685"/>
        <dbReference type="Rhea" id="RHEA-COMP:9945"/>
        <dbReference type="ChEBI" id="CHEBI:57705"/>
        <dbReference type="ChEBI" id="CHEBI:64479"/>
        <dbReference type="ChEBI" id="CHEBI:78827"/>
        <dbReference type="ChEBI" id="CHEBI:173225"/>
        <dbReference type="EC" id="2.3.1.129"/>
    </reaction>
</comment>
<comment type="pathway">
    <text evidence="1">Glycolipid biosynthesis; lipid IV(A) biosynthesis; lipid IV(A) from (3R)-3-hydroxytetradecanoyl-[acyl-carrier-protein] and UDP-N-acetyl-alpha-D-glucosamine: step 1/6.</text>
</comment>
<comment type="subunit">
    <text evidence="1">Homotrimer.</text>
</comment>
<comment type="subcellular location">
    <subcellularLocation>
        <location evidence="1">Cytoplasm</location>
    </subcellularLocation>
</comment>
<comment type="similarity">
    <text evidence="1">Belongs to the transferase hexapeptide repeat family. LpxA subfamily.</text>
</comment>
<reference key="1">
    <citation type="journal article" date="2005" name="J. Bacteriol.">
        <title>Completion of the genome sequence of Brucella abortus and comparison to the highly similar genomes of Brucella melitensis and Brucella suis.</title>
        <authorList>
            <person name="Halling S.M."/>
            <person name="Peterson-Burch B.D."/>
            <person name="Bricker B.J."/>
            <person name="Zuerner R.L."/>
            <person name="Qing Z."/>
            <person name="Li L.-L."/>
            <person name="Kapur V."/>
            <person name="Alt D.P."/>
            <person name="Olsen S.C."/>
        </authorList>
    </citation>
    <scope>NUCLEOTIDE SEQUENCE [LARGE SCALE GENOMIC DNA]</scope>
    <source>
        <strain>9-941</strain>
    </source>
</reference>
<protein>
    <recommendedName>
        <fullName evidence="1">Acyl-[acyl-carrier-protein]--UDP-N-acetylglucosamine O-acyltransferase</fullName>
        <shortName evidence="1">UDP-N-acetylglucosamine acyltransferase</shortName>
        <ecNumber evidence="1">2.3.1.129</ecNumber>
    </recommendedName>
</protein>
<organism>
    <name type="scientific">Brucella abortus biovar 1 (strain 9-941)</name>
    <dbReference type="NCBI Taxonomy" id="262698"/>
    <lineage>
        <taxon>Bacteria</taxon>
        <taxon>Pseudomonadati</taxon>
        <taxon>Pseudomonadota</taxon>
        <taxon>Alphaproteobacteria</taxon>
        <taxon>Hyphomicrobiales</taxon>
        <taxon>Brucellaceae</taxon>
        <taxon>Brucella/Ochrobactrum group</taxon>
        <taxon>Brucella</taxon>
    </lineage>
</organism>
<proteinExistence type="inferred from homology"/>
<evidence type="ECO:0000255" key="1">
    <source>
        <dbReference type="HAMAP-Rule" id="MF_00387"/>
    </source>
</evidence>